<sequence length="406" mass="45590">MSLIRVNGEAFKFSLESLEEDPFETKETLEILVKQTSVVLLAAGESRRFSQTIKKQWLRSNHTPLWLSVYESFKEALDFKEIVLVVSELDYIYIQRHYPEIKLIKGGASRQESVRNALKIIDSAYTLTSDVARGLANMETLKSLFLTLQQTSHYCIAPYLPCYDTAIYYNEALDREAIKLIQTPQLSHTKTLQSALNQGDFKDESSAILQAFPNSVSYIEGSKDLHKLTTSDDLKHFAFFFNPAKDTFIGMGFDTHAFIKDKPMVLGGVVLDCEFGLKAHSDGDALLHAVIDAVLGAIKGGDIGEWFPDNDPKYKNASSKELLKIVLDFSQSIGFELFEMGATIFSEIPKITPYKPAILENLSQLLGLEKSQISLKATTMEKMGFIGKQEGLLVQAHVSMRYKQKL</sequence>
<protein>
    <recommendedName>
        <fullName evidence="1">Bifunctional enzyme IspD/IspF</fullName>
    </recommendedName>
    <domain>
        <recommendedName>
            <fullName evidence="1">2-C-methyl-D-erythritol 4-phosphate cytidylyltransferase</fullName>
            <ecNumber evidence="1">2.7.7.60</ecNumber>
        </recommendedName>
        <alternativeName>
            <fullName evidence="1">4-diphosphocytidyl-2C-methyl-D-erythritol synthase</fullName>
        </alternativeName>
        <alternativeName>
            <fullName evidence="1">MEP cytidylyltransferase</fullName>
            <shortName evidence="1">MCT</shortName>
        </alternativeName>
    </domain>
    <domain>
        <recommendedName>
            <fullName evidence="1">2-C-methyl-D-erythritol 2,4-cyclodiphosphate synthase</fullName>
            <shortName evidence="1">MECDP-synthase</shortName>
            <shortName evidence="1">MECPP-synthase</shortName>
            <shortName evidence="1">MECPS</shortName>
            <ecNumber evidence="1">4.6.1.12</ecNumber>
        </recommendedName>
    </domain>
</protein>
<accession>Q1CU78</accession>
<evidence type="ECO:0000255" key="1">
    <source>
        <dbReference type="HAMAP-Rule" id="MF_01520"/>
    </source>
</evidence>
<dbReference type="EC" id="2.7.7.60" evidence="1"/>
<dbReference type="EC" id="4.6.1.12" evidence="1"/>
<dbReference type="EMBL" id="CP000241">
    <property type="protein sequence ID" value="ABF84494.1"/>
    <property type="molecule type" value="Genomic_DNA"/>
</dbReference>
<dbReference type="RefSeq" id="WP_000052892.1">
    <property type="nucleotide sequence ID" value="NC_008086.1"/>
</dbReference>
<dbReference type="SMR" id="Q1CU78"/>
<dbReference type="KEGG" id="hpa:HPAG1_0427"/>
<dbReference type="HOGENOM" id="CLU_042800_2_6_7"/>
<dbReference type="UniPathway" id="UPA00056">
    <property type="reaction ID" value="UER00093"/>
</dbReference>
<dbReference type="UniPathway" id="UPA00056">
    <property type="reaction ID" value="UER00095"/>
</dbReference>
<dbReference type="GO" id="GO:0008685">
    <property type="term" value="F:2-C-methyl-D-erythritol 2,4-cyclodiphosphate synthase activity"/>
    <property type="evidence" value="ECO:0007669"/>
    <property type="project" value="UniProtKB-UniRule"/>
</dbReference>
<dbReference type="GO" id="GO:0050518">
    <property type="term" value="F:2-C-methyl-D-erythritol 4-phosphate cytidylyltransferase activity"/>
    <property type="evidence" value="ECO:0007669"/>
    <property type="project" value="UniProtKB-UniRule"/>
</dbReference>
<dbReference type="GO" id="GO:0046872">
    <property type="term" value="F:metal ion binding"/>
    <property type="evidence" value="ECO:0007669"/>
    <property type="project" value="UniProtKB-KW"/>
</dbReference>
<dbReference type="GO" id="GO:0019288">
    <property type="term" value="P:isopentenyl diphosphate biosynthetic process, methylerythritol 4-phosphate pathway"/>
    <property type="evidence" value="ECO:0007669"/>
    <property type="project" value="UniProtKB-UniRule"/>
</dbReference>
<dbReference type="GO" id="GO:0016114">
    <property type="term" value="P:terpenoid biosynthetic process"/>
    <property type="evidence" value="ECO:0007669"/>
    <property type="project" value="InterPro"/>
</dbReference>
<dbReference type="CDD" id="cd02516">
    <property type="entry name" value="CDP-ME_synthetase"/>
    <property type="match status" value="1"/>
</dbReference>
<dbReference type="CDD" id="cd00554">
    <property type="entry name" value="MECDP_synthase"/>
    <property type="match status" value="1"/>
</dbReference>
<dbReference type="FunFam" id="3.30.1330.50:FF:000005">
    <property type="entry name" value="Bifunctional enzyme IspD/IspF"/>
    <property type="match status" value="1"/>
</dbReference>
<dbReference type="FunFam" id="3.90.550.10:FF:000259">
    <property type="entry name" value="Bifunctional enzyme IspD/IspF"/>
    <property type="match status" value="1"/>
</dbReference>
<dbReference type="Gene3D" id="3.30.1330.50">
    <property type="entry name" value="2-C-methyl-D-erythritol 2,4-cyclodiphosphate synthase"/>
    <property type="match status" value="1"/>
</dbReference>
<dbReference type="Gene3D" id="3.90.550.10">
    <property type="entry name" value="Spore Coat Polysaccharide Biosynthesis Protein SpsA, Chain A"/>
    <property type="match status" value="1"/>
</dbReference>
<dbReference type="HAMAP" id="MF_01520">
    <property type="entry name" value="IspDF"/>
    <property type="match status" value="1"/>
</dbReference>
<dbReference type="HAMAP" id="MF_00107">
    <property type="entry name" value="IspF"/>
    <property type="match status" value="1"/>
</dbReference>
<dbReference type="InterPro" id="IPR001228">
    <property type="entry name" value="IspD"/>
</dbReference>
<dbReference type="InterPro" id="IPR026596">
    <property type="entry name" value="IspD/F"/>
</dbReference>
<dbReference type="InterPro" id="IPR034683">
    <property type="entry name" value="IspD/TarI"/>
</dbReference>
<dbReference type="InterPro" id="IPR018294">
    <property type="entry name" value="ISPD_synthase_CS"/>
</dbReference>
<dbReference type="InterPro" id="IPR003526">
    <property type="entry name" value="MECDP_synthase"/>
</dbReference>
<dbReference type="InterPro" id="IPR020555">
    <property type="entry name" value="MECDP_synthase_CS"/>
</dbReference>
<dbReference type="InterPro" id="IPR036571">
    <property type="entry name" value="MECDP_synthase_sf"/>
</dbReference>
<dbReference type="InterPro" id="IPR029044">
    <property type="entry name" value="Nucleotide-diphossugar_trans"/>
</dbReference>
<dbReference type="NCBIfam" id="TIGR00453">
    <property type="entry name" value="ispD"/>
    <property type="match status" value="1"/>
</dbReference>
<dbReference type="NCBIfam" id="TIGR00151">
    <property type="entry name" value="ispF"/>
    <property type="match status" value="1"/>
</dbReference>
<dbReference type="NCBIfam" id="NF006899">
    <property type="entry name" value="PRK09382.1"/>
    <property type="match status" value="1"/>
</dbReference>
<dbReference type="PANTHER" id="PTHR43181">
    <property type="entry name" value="2-C-METHYL-D-ERYTHRITOL 2,4-CYCLODIPHOSPHATE SYNTHASE, CHLOROPLASTIC"/>
    <property type="match status" value="1"/>
</dbReference>
<dbReference type="PANTHER" id="PTHR43181:SF1">
    <property type="entry name" value="2-C-METHYL-D-ERYTHRITOL 2,4-CYCLODIPHOSPHATE SYNTHASE, CHLOROPLASTIC"/>
    <property type="match status" value="1"/>
</dbReference>
<dbReference type="Pfam" id="PF01128">
    <property type="entry name" value="IspD"/>
    <property type="match status" value="1"/>
</dbReference>
<dbReference type="Pfam" id="PF02542">
    <property type="entry name" value="YgbB"/>
    <property type="match status" value="1"/>
</dbReference>
<dbReference type="SUPFAM" id="SSF69765">
    <property type="entry name" value="IpsF-like"/>
    <property type="match status" value="1"/>
</dbReference>
<dbReference type="SUPFAM" id="SSF53448">
    <property type="entry name" value="Nucleotide-diphospho-sugar transferases"/>
    <property type="match status" value="1"/>
</dbReference>
<dbReference type="PROSITE" id="PS01295">
    <property type="entry name" value="ISPD"/>
    <property type="match status" value="1"/>
</dbReference>
<dbReference type="PROSITE" id="PS01350">
    <property type="entry name" value="ISPF"/>
    <property type="match status" value="1"/>
</dbReference>
<name>ISPDF_HELPH</name>
<feature type="chain" id="PRO_0000296747" description="Bifunctional enzyme IspD/IspF">
    <location>
        <begin position="1"/>
        <end position="406"/>
    </location>
</feature>
<feature type="region of interest" description="2-C-methyl-D-erythritol 4-phosphate cytidylyltransferase" evidence="1">
    <location>
        <begin position="1"/>
        <end position="247"/>
    </location>
</feature>
<feature type="region of interest" description="2-C-methyl-D-erythritol 2,4-cyclodiphosphate synthase" evidence="1">
    <location>
        <begin position="248"/>
        <end position="406"/>
    </location>
</feature>
<feature type="binding site" evidence="1">
    <location>
        <begin position="254"/>
        <end position="256"/>
    </location>
    <ligand>
        <name>4-CDP-2-C-methyl-D-erythritol 2-phosphate</name>
        <dbReference type="ChEBI" id="CHEBI:57919"/>
    </ligand>
</feature>
<feature type="binding site" evidence="1">
    <location>
        <position position="254"/>
    </location>
    <ligand>
        <name>a divalent metal cation</name>
        <dbReference type="ChEBI" id="CHEBI:60240"/>
    </ligand>
</feature>
<feature type="binding site" evidence="1">
    <location>
        <position position="256"/>
    </location>
    <ligand>
        <name>a divalent metal cation</name>
        <dbReference type="ChEBI" id="CHEBI:60240"/>
    </ligand>
</feature>
<feature type="binding site" evidence="1">
    <location>
        <begin position="280"/>
        <end position="281"/>
    </location>
    <ligand>
        <name>4-CDP-2-C-methyl-D-erythritol 2-phosphate</name>
        <dbReference type="ChEBI" id="CHEBI:57919"/>
    </ligand>
</feature>
<feature type="binding site" evidence="1">
    <location>
        <position position="288"/>
    </location>
    <ligand>
        <name>a divalent metal cation</name>
        <dbReference type="ChEBI" id="CHEBI:60240"/>
    </ligand>
</feature>
<feature type="binding site" evidence="1">
    <location>
        <begin position="302"/>
        <end position="304"/>
    </location>
    <ligand>
        <name>4-CDP-2-C-methyl-D-erythritol 2-phosphate</name>
        <dbReference type="ChEBI" id="CHEBI:57919"/>
    </ligand>
</feature>
<feature type="binding site" evidence="1">
    <location>
        <begin position="307"/>
        <end position="311"/>
    </location>
    <ligand>
        <name>4-CDP-2-C-methyl-D-erythritol 2-phosphate</name>
        <dbReference type="ChEBI" id="CHEBI:57919"/>
    </ligand>
</feature>
<feature type="binding site" evidence="1">
    <location>
        <begin position="378"/>
        <end position="381"/>
    </location>
    <ligand>
        <name>4-CDP-2-C-methyl-D-erythritol 2-phosphate</name>
        <dbReference type="ChEBI" id="CHEBI:57919"/>
    </ligand>
</feature>
<feature type="binding site" evidence="1">
    <location>
        <position position="385"/>
    </location>
    <ligand>
        <name>4-CDP-2-C-methyl-D-erythritol 2-phosphate</name>
        <dbReference type="ChEBI" id="CHEBI:57919"/>
    </ligand>
</feature>
<feature type="binding site" evidence="1">
    <location>
        <position position="388"/>
    </location>
    <ligand>
        <name>4-CDP-2-C-methyl-D-erythritol 2-phosphate</name>
        <dbReference type="ChEBI" id="CHEBI:57919"/>
    </ligand>
</feature>
<feature type="site" description="Transition state stabilizer" evidence="1">
    <location>
        <position position="48"/>
    </location>
</feature>
<feature type="site" description="Transition state stabilizer" evidence="1">
    <location>
        <position position="55"/>
    </location>
</feature>
<feature type="site" description="Positions MEP for the nucleophilic attack" evidence="1">
    <location>
        <position position="175"/>
    </location>
</feature>
<feature type="site" description="Positions MEP for the nucleophilic attack" evidence="1">
    <location>
        <position position="227"/>
    </location>
</feature>
<feature type="site" description="Transition state stabilizer" evidence="1">
    <location>
        <position position="280"/>
    </location>
</feature>
<feature type="site" description="Transition state stabilizer" evidence="1">
    <location>
        <position position="379"/>
    </location>
</feature>
<keyword id="KW-0414">Isoprene biosynthesis</keyword>
<keyword id="KW-0456">Lyase</keyword>
<keyword id="KW-0479">Metal-binding</keyword>
<keyword id="KW-0511">Multifunctional enzyme</keyword>
<keyword id="KW-0548">Nucleotidyltransferase</keyword>
<keyword id="KW-0808">Transferase</keyword>
<comment type="function">
    <text evidence="1">Bifunctional enzyme that catalyzes the formation of 4-diphosphocytidyl-2-C-methyl-D-erythritol from CTP and 2-C-methyl-D-erythritol 4-phosphate (MEP) (IspD), and catalyzes the conversion of 4-diphosphocytidyl-2-C-methyl-D-erythritol 2-phosphate (CDP-ME2P) to 2-C-methyl-D-erythritol 2,4-cyclodiphosphate (ME-CPP) with a corresponding release of cytidine 5-monophosphate (CMP) (IspF).</text>
</comment>
<comment type="catalytic activity">
    <reaction evidence="1">
        <text>2-C-methyl-D-erythritol 4-phosphate + CTP + H(+) = 4-CDP-2-C-methyl-D-erythritol + diphosphate</text>
        <dbReference type="Rhea" id="RHEA:13429"/>
        <dbReference type="ChEBI" id="CHEBI:15378"/>
        <dbReference type="ChEBI" id="CHEBI:33019"/>
        <dbReference type="ChEBI" id="CHEBI:37563"/>
        <dbReference type="ChEBI" id="CHEBI:57823"/>
        <dbReference type="ChEBI" id="CHEBI:58262"/>
        <dbReference type="EC" id="2.7.7.60"/>
    </reaction>
</comment>
<comment type="catalytic activity">
    <reaction evidence="1">
        <text>4-CDP-2-C-methyl-D-erythritol 2-phosphate = 2-C-methyl-D-erythritol 2,4-cyclic diphosphate + CMP</text>
        <dbReference type="Rhea" id="RHEA:23864"/>
        <dbReference type="ChEBI" id="CHEBI:57919"/>
        <dbReference type="ChEBI" id="CHEBI:58483"/>
        <dbReference type="ChEBI" id="CHEBI:60377"/>
        <dbReference type="EC" id="4.6.1.12"/>
    </reaction>
</comment>
<comment type="cofactor">
    <cofactor evidence="1">
        <name>a divalent metal cation</name>
        <dbReference type="ChEBI" id="CHEBI:60240"/>
    </cofactor>
</comment>
<comment type="pathway">
    <text evidence="1">Isoprenoid biosynthesis; isopentenyl diphosphate biosynthesis via DXP pathway; isopentenyl diphosphate from 1-deoxy-D-xylulose 5-phosphate: step 2/6.</text>
</comment>
<comment type="pathway">
    <text evidence="1">Isoprenoid biosynthesis; isopentenyl diphosphate biosynthesis via DXP pathway; isopentenyl diphosphate from 1-deoxy-D-xylulose 5-phosphate: step 4/6.</text>
</comment>
<comment type="similarity">
    <text evidence="1">In the N-terminal section; belongs to the IspD/TarI cytidylyltransferase family. IspD subfamily.</text>
</comment>
<comment type="similarity">
    <text evidence="1">In the C-terminal section; belongs to the IspF family.</text>
</comment>
<reference key="1">
    <citation type="journal article" date="2006" name="Proc. Natl. Acad. Sci. U.S.A.">
        <title>The complete genome sequence of a chronic atrophic gastritis Helicobacter pylori strain: evolution during disease progression.</title>
        <authorList>
            <person name="Oh J.D."/>
            <person name="Kling-Baeckhed H."/>
            <person name="Giannakis M."/>
            <person name="Xu J."/>
            <person name="Fulton R.S."/>
            <person name="Fulton L.A."/>
            <person name="Cordum H.S."/>
            <person name="Wang C."/>
            <person name="Elliott G."/>
            <person name="Edwards J."/>
            <person name="Mardis E.R."/>
            <person name="Engstrand L.G."/>
            <person name="Gordon J.I."/>
        </authorList>
    </citation>
    <scope>NUCLEOTIDE SEQUENCE [LARGE SCALE GENOMIC DNA]</scope>
    <source>
        <strain>HPAG1</strain>
    </source>
</reference>
<gene>
    <name evidence="1" type="primary">ispDF</name>
    <name type="ordered locus">HPAG1_0427</name>
</gene>
<proteinExistence type="inferred from homology"/>
<organism>
    <name type="scientific">Helicobacter pylori (strain HPAG1)</name>
    <dbReference type="NCBI Taxonomy" id="357544"/>
    <lineage>
        <taxon>Bacteria</taxon>
        <taxon>Pseudomonadati</taxon>
        <taxon>Campylobacterota</taxon>
        <taxon>Epsilonproteobacteria</taxon>
        <taxon>Campylobacterales</taxon>
        <taxon>Helicobacteraceae</taxon>
        <taxon>Helicobacter</taxon>
    </lineage>
</organism>